<comment type="similarity">
    <text evidence="2">Belongs to the UDP-glycosyltransferase family.</text>
</comment>
<evidence type="ECO:0000250" key="1"/>
<evidence type="ECO:0000305" key="2"/>
<dbReference type="EC" id="2.4.1.-"/>
<dbReference type="EMBL" id="AP002046">
    <property type="protein sequence ID" value="BAB01943.1"/>
    <property type="molecule type" value="Genomic_DNA"/>
</dbReference>
<dbReference type="EMBL" id="CP002686">
    <property type="protein sequence ID" value="AEE76612.1"/>
    <property type="molecule type" value="Genomic_DNA"/>
</dbReference>
<dbReference type="EMBL" id="AK176842">
    <property type="protein sequence ID" value="BAD44605.1"/>
    <property type="molecule type" value="mRNA"/>
</dbReference>
<dbReference type="RefSeq" id="NP_188864.1">
    <property type="nucleotide sequence ID" value="NM_113123.2"/>
</dbReference>
<dbReference type="SMR" id="Q9LHJ2"/>
<dbReference type="STRING" id="3702.Q9LHJ2"/>
<dbReference type="CAZy" id="GT1">
    <property type="family name" value="Glycosyltransferase Family 1"/>
</dbReference>
<dbReference type="PaxDb" id="3702-AT3G22250.1"/>
<dbReference type="EnsemblPlants" id="AT3G22250.1">
    <property type="protein sequence ID" value="AT3G22250.1"/>
    <property type="gene ID" value="AT3G22250"/>
</dbReference>
<dbReference type="GeneID" id="821795"/>
<dbReference type="Gramene" id="AT3G22250.1">
    <property type="protein sequence ID" value="AT3G22250.1"/>
    <property type="gene ID" value="AT3G22250"/>
</dbReference>
<dbReference type="KEGG" id="ath:AT3G22250"/>
<dbReference type="Araport" id="AT3G22250"/>
<dbReference type="TAIR" id="AT3G22250"/>
<dbReference type="eggNOG" id="KOG1192">
    <property type="taxonomic scope" value="Eukaryota"/>
</dbReference>
<dbReference type="HOGENOM" id="CLU_001724_0_2_1"/>
<dbReference type="InParanoid" id="Q9LHJ2"/>
<dbReference type="OMA" id="FAMENNM"/>
<dbReference type="PhylomeDB" id="Q9LHJ2"/>
<dbReference type="BioCyc" id="ARA:AT3G22250-MONOMER"/>
<dbReference type="PRO" id="PR:Q9LHJ2"/>
<dbReference type="Proteomes" id="UP000006548">
    <property type="component" value="Chromosome 3"/>
</dbReference>
<dbReference type="ExpressionAtlas" id="Q9LHJ2">
    <property type="expression patterns" value="baseline and differential"/>
</dbReference>
<dbReference type="GO" id="GO:0035251">
    <property type="term" value="F:UDP-glucosyltransferase activity"/>
    <property type="evidence" value="ECO:0007669"/>
    <property type="project" value="UniProtKB-ARBA"/>
</dbReference>
<dbReference type="CDD" id="cd03784">
    <property type="entry name" value="GT1_Gtf-like"/>
    <property type="match status" value="1"/>
</dbReference>
<dbReference type="FunFam" id="3.40.50.2000:FF:000122">
    <property type="entry name" value="Glycosyltransferase"/>
    <property type="match status" value="1"/>
</dbReference>
<dbReference type="FunFam" id="3.40.50.2000:FF:000300">
    <property type="entry name" value="Glycosyltransferase"/>
    <property type="match status" value="1"/>
</dbReference>
<dbReference type="Gene3D" id="3.40.50.2000">
    <property type="entry name" value="Glycogen Phosphorylase B"/>
    <property type="match status" value="2"/>
</dbReference>
<dbReference type="InterPro" id="IPR002213">
    <property type="entry name" value="UDP_glucos_trans"/>
</dbReference>
<dbReference type="InterPro" id="IPR035595">
    <property type="entry name" value="UDP_glycos_trans_CS"/>
</dbReference>
<dbReference type="PANTHER" id="PTHR11926">
    <property type="entry name" value="GLUCOSYL/GLUCURONOSYL TRANSFERASES"/>
    <property type="match status" value="1"/>
</dbReference>
<dbReference type="PANTHER" id="PTHR11926:SF1402">
    <property type="entry name" value="GLYCOSYLTRANSFERASE"/>
    <property type="match status" value="1"/>
</dbReference>
<dbReference type="Pfam" id="PF00201">
    <property type="entry name" value="UDPGT"/>
    <property type="match status" value="1"/>
</dbReference>
<dbReference type="SUPFAM" id="SSF53756">
    <property type="entry name" value="UDP-Glycosyltransferase/glycogen phosphorylase"/>
    <property type="match status" value="1"/>
</dbReference>
<dbReference type="PROSITE" id="PS00375">
    <property type="entry name" value="UDPGT"/>
    <property type="match status" value="1"/>
</dbReference>
<feature type="chain" id="PRO_0000409118" description="UDP-glycosyltransferase 82A1">
    <location>
        <begin position="1"/>
        <end position="461"/>
    </location>
</feature>
<feature type="binding site" evidence="1">
    <location>
        <position position="292"/>
    </location>
    <ligand>
        <name>UDP-alpha-D-glucose</name>
        <dbReference type="ChEBI" id="CHEBI:58885"/>
    </ligand>
</feature>
<feature type="binding site" evidence="1">
    <location>
        <begin position="349"/>
        <end position="351"/>
    </location>
    <ligand>
        <name>UDP-alpha-D-glucose</name>
        <dbReference type="ChEBI" id="CHEBI:58885"/>
    </ligand>
</feature>
<feature type="binding site" evidence="1">
    <location>
        <begin position="366"/>
        <end position="374"/>
    </location>
    <ligand>
        <name>UDP-alpha-D-glucose</name>
        <dbReference type="ChEBI" id="CHEBI:58885"/>
    </ligand>
</feature>
<feature type="binding site" evidence="1">
    <location>
        <begin position="388"/>
        <end position="391"/>
    </location>
    <ligand>
        <name>UDP-alpha-D-glucose</name>
        <dbReference type="ChEBI" id="CHEBI:58885"/>
    </ligand>
</feature>
<feature type="sequence conflict" description="In Ref. 3; BAD44605." evidence="2" ref="3">
    <original>N</original>
    <variation>S</variation>
    <location>
        <position position="461"/>
    </location>
</feature>
<organism>
    <name type="scientific">Arabidopsis thaliana</name>
    <name type="common">Mouse-ear cress</name>
    <dbReference type="NCBI Taxonomy" id="3702"/>
    <lineage>
        <taxon>Eukaryota</taxon>
        <taxon>Viridiplantae</taxon>
        <taxon>Streptophyta</taxon>
        <taxon>Embryophyta</taxon>
        <taxon>Tracheophyta</taxon>
        <taxon>Spermatophyta</taxon>
        <taxon>Magnoliopsida</taxon>
        <taxon>eudicotyledons</taxon>
        <taxon>Gunneridae</taxon>
        <taxon>Pentapetalae</taxon>
        <taxon>rosids</taxon>
        <taxon>malvids</taxon>
        <taxon>Brassicales</taxon>
        <taxon>Brassicaceae</taxon>
        <taxon>Camelineae</taxon>
        <taxon>Arabidopsis</taxon>
    </lineage>
</organism>
<gene>
    <name type="primary">UGT82A1</name>
    <name type="ordered locus">At3g22250</name>
    <name type="ORF">MMP21.3</name>
</gene>
<sequence>MKVTQKPKIIFIPYPAQGHVTPMLHLASAFLSRGFSPVVMTPESIHRRISATNEDLGITFLALSDGQDRPDAPPSDFFSIENSMENIMPPQLERLLLEEDLDVACVVVDLLASWAIGVADRCGVPVAGFWPVMFAAYRLIQAIPELVRTGLVSQKGCPRQLEKTIVQPEQPLLSAEDLPWLIGTPKAQKKRFKFWQRTLERTKSLRWILTSSFKDEYEDVDNHKASYKKSNDLNKENNGQNPQILHLGPLHNQEATNNITITKTSFWEEDMSCLGWLQEQNPNSVIYISFGSWVSPIGESNIQTLALALEASGRPFLWALNRVWQEGLPPGFVHRVTITKNQGRIVSWAPQLEVLRNDSVGCYVTHCGWNSTMEAVASSRRLLCYPVAGDQFVNCKYIVDVWKIGVRLSGFGEKEVEDGLRKVMEDQDMGERLRKLRDRAMGNEARLSSEMNFTFLKNELN</sequence>
<proteinExistence type="evidence at transcript level"/>
<keyword id="KW-0328">Glycosyltransferase</keyword>
<keyword id="KW-1185">Reference proteome</keyword>
<keyword id="KW-0808">Transferase</keyword>
<accession>Q9LHJ2</accession>
<accession>Q67XH7</accession>
<reference key="1">
    <citation type="journal article" date="2000" name="DNA Res.">
        <title>Structural analysis of Arabidopsis thaliana chromosome 3. II. Sequence features of the 4,251,695 bp regions covered by 90 P1, TAC and BAC clones.</title>
        <authorList>
            <person name="Kaneko T."/>
            <person name="Katoh T."/>
            <person name="Sato S."/>
            <person name="Nakamura Y."/>
            <person name="Asamizu E."/>
            <person name="Tabata S."/>
        </authorList>
    </citation>
    <scope>NUCLEOTIDE SEQUENCE [LARGE SCALE GENOMIC DNA]</scope>
    <source>
        <strain>cv. Columbia</strain>
    </source>
</reference>
<reference key="2">
    <citation type="journal article" date="2017" name="Plant J.">
        <title>Araport11: a complete reannotation of the Arabidopsis thaliana reference genome.</title>
        <authorList>
            <person name="Cheng C.Y."/>
            <person name="Krishnakumar V."/>
            <person name="Chan A.P."/>
            <person name="Thibaud-Nissen F."/>
            <person name="Schobel S."/>
            <person name="Town C.D."/>
        </authorList>
    </citation>
    <scope>GENOME REANNOTATION</scope>
    <source>
        <strain>cv. Columbia</strain>
    </source>
</reference>
<reference key="3">
    <citation type="submission" date="2004-09" db="EMBL/GenBank/DDBJ databases">
        <title>Large-scale analysis of RIKEN Arabidopsis full-length (RAFL) cDNAs.</title>
        <authorList>
            <person name="Totoki Y."/>
            <person name="Seki M."/>
            <person name="Ishida J."/>
            <person name="Nakajima M."/>
            <person name="Enju A."/>
            <person name="Kamiya A."/>
            <person name="Narusaka M."/>
            <person name="Shin-i T."/>
            <person name="Nakagawa M."/>
            <person name="Sakamoto N."/>
            <person name="Oishi K."/>
            <person name="Kohara Y."/>
            <person name="Kobayashi M."/>
            <person name="Toyoda A."/>
            <person name="Sakaki Y."/>
            <person name="Sakurai T."/>
            <person name="Iida K."/>
            <person name="Akiyama K."/>
            <person name="Satou M."/>
            <person name="Toyoda T."/>
            <person name="Konagaya A."/>
            <person name="Carninci P."/>
            <person name="Kawai J."/>
            <person name="Hayashizaki Y."/>
            <person name="Shinozaki K."/>
        </authorList>
    </citation>
    <scope>NUCLEOTIDE SEQUENCE [LARGE SCALE MRNA]</scope>
    <source>
        <strain>cv. Columbia</strain>
    </source>
</reference>
<reference key="4">
    <citation type="journal article" date="2001" name="J. Biol. Chem.">
        <title>Phylogenetic analysis of the UDP-glycosyltransferase multigene family of Arabidopsis thaliana.</title>
        <authorList>
            <person name="Li Y."/>
            <person name="Baldauf S."/>
            <person name="Lim E.K."/>
            <person name="Bowles D.J."/>
        </authorList>
    </citation>
    <scope>GENE FAMILY</scope>
</reference>
<protein>
    <recommendedName>
        <fullName>UDP-glycosyltransferase 82A1</fullName>
        <ecNumber>2.4.1.-</ecNumber>
    </recommendedName>
</protein>
<name>U82A1_ARATH</name>